<gene>
    <name type="primary">Myl6</name>
    <name type="synonym">Myln</name>
</gene>
<reference key="1">
    <citation type="journal article" date="2004" name="Genome Res.">
        <title>The status, quality, and expansion of the NIH full-length cDNA project: the Mammalian Gene Collection (MGC).</title>
        <authorList>
            <consortium name="The MGC Project Team"/>
        </authorList>
    </citation>
    <scope>NUCLEOTIDE SEQUENCE [LARGE SCALE MRNA] (ISOFORM SMOOTH MUSCLE)</scope>
    <source>
        <strain>Czech II</strain>
        <tissue>Mammary tumor</tissue>
    </source>
</reference>
<reference key="2">
    <citation type="submission" date="2008-03" db="UniProtKB">
        <authorList>
            <person name="Sumpton D.P."/>
            <person name="Sandilands E."/>
            <person name="Frame M.C."/>
            <person name="Bienvenut W.V."/>
        </authorList>
    </citation>
    <scope>PROTEIN SEQUENCE OF 2-21 AND 27-119 (ISOFORMS NON-MUSCLE/SMOOTH MUSCLE)</scope>
    <scope>PROTEIN SEQUENCE OF 120-146 (ISOFORMS NON-MUSCLE AND SMOOTH MUSCLE)</scope>
    <scope>CLEAVAGE OF INITIATOR METHIONINE</scope>
    <scope>ACETYLATION AT CYS-2</scope>
    <scope>IDENTIFICATION BY MASS SPECTROMETRY</scope>
    <source>
        <tissue>Embryonic fibroblast</tissue>
    </source>
</reference>
<reference key="3">
    <citation type="journal article" date="1994" name="Cell. Mol. Biol. Res.">
        <title>Regulation of nonmuscle myosin light chain 3 gene expression in response to exogenous MLC3nm mRNA.</title>
        <authorList>
            <person name="Hailstones D.L."/>
            <person name="Gunning P.W."/>
        </authorList>
    </citation>
    <scope>NUCLEOTIDE SEQUENCE [MRNA] OF 11-151 (ISOFORM NON-MUSCLE)</scope>
</reference>
<reference key="4">
    <citation type="journal article" date="2009" name="Immunity">
        <title>The phagosomal proteome in interferon-gamma-activated macrophages.</title>
        <authorList>
            <person name="Trost M."/>
            <person name="English L."/>
            <person name="Lemieux S."/>
            <person name="Courcelles M."/>
            <person name="Desjardins M."/>
            <person name="Thibault P."/>
        </authorList>
    </citation>
    <scope>PHOSPHORYLATION [LARGE SCALE ANALYSIS] AT SER-135 (ISOFORM SMOOTH MUSCLE)</scope>
    <scope>IDENTIFICATION BY MASS SPECTROMETRY [LARGE SCALE ANALYSIS]</scope>
</reference>
<reference key="5">
    <citation type="journal article" date="2010" name="Cell">
        <title>A tissue-specific atlas of mouse protein phosphorylation and expression.</title>
        <authorList>
            <person name="Huttlin E.L."/>
            <person name="Jedrychowski M.P."/>
            <person name="Elias J.E."/>
            <person name="Goswami T."/>
            <person name="Rad R."/>
            <person name="Beausoleil S.A."/>
            <person name="Villen J."/>
            <person name="Haas W."/>
            <person name="Sowa M.E."/>
            <person name="Gygi S.P."/>
        </authorList>
    </citation>
    <scope>PHOSPHORYLATION [LARGE SCALE ANALYSIS] AT SER-57</scope>
    <scope>PHOSPHORYLATION [LARGE SCALE ANALYSIS] AT SER-135 (ISOFORM SMOOTH MUSCLE)</scope>
    <scope>IDENTIFICATION BY MASS SPECTROMETRY [LARGE SCALE ANALYSIS]</scope>
    <source>
        <tissue>Brain</tissue>
        <tissue>Brown adipose tissue</tissue>
        <tissue>Heart</tissue>
        <tissue>Kidney</tissue>
        <tissue>Liver</tissue>
        <tissue>Lung</tissue>
        <tissue>Pancreas</tissue>
        <tissue>Spleen</tissue>
        <tissue>Testis</tissue>
    </source>
</reference>
<reference key="6">
    <citation type="journal article" date="2013" name="Mol. Cell">
        <title>SIRT5-mediated lysine desuccinylation impacts diverse metabolic pathways.</title>
        <authorList>
            <person name="Park J."/>
            <person name="Chen Y."/>
            <person name="Tishkoff D.X."/>
            <person name="Peng C."/>
            <person name="Tan M."/>
            <person name="Dai L."/>
            <person name="Xie Z."/>
            <person name="Zhang Y."/>
            <person name="Zwaans B.M."/>
            <person name="Skinner M.E."/>
            <person name="Lombard D.B."/>
            <person name="Zhao Y."/>
        </authorList>
    </citation>
    <scope>ACETYLATION [LARGE SCALE ANALYSIS] AT LYS-81</scope>
    <scope>IDENTIFICATION BY MASS SPECTROMETRY [LARGE SCALE ANALYSIS]</scope>
    <source>
        <tissue>Embryonic fibroblast</tissue>
    </source>
</reference>
<reference key="7">
    <citation type="journal article" date="2015" name="Proc. Natl. Acad. Sci. U.S.A.">
        <title>Spata6 is required for normal assembly of the sperm connecting piece and tight head-tail conjunction.</title>
        <authorList>
            <person name="Yuan S."/>
            <person name="Stratton C.J."/>
            <person name="Bao J."/>
            <person name="Zheng H."/>
            <person name="Bhetwal B.P."/>
            <person name="Yanagimachi R."/>
            <person name="Yan W."/>
        </authorList>
    </citation>
    <scope>INTERACTION WITH SPATA6</scope>
</reference>
<dbReference type="EMBL" id="BC026760">
    <property type="protein sequence ID" value="AAH26760.1"/>
    <property type="molecule type" value="mRNA"/>
</dbReference>
<dbReference type="EMBL" id="U04443">
    <property type="protein sequence ID" value="AAC52278.1"/>
    <property type="molecule type" value="mRNA"/>
</dbReference>
<dbReference type="CCDS" id="CCDS48728.1">
    <molecule id="Q60605-2"/>
</dbReference>
<dbReference type="CCDS" id="CCDS88112.1">
    <molecule id="Q60605-1"/>
</dbReference>
<dbReference type="RefSeq" id="NP_001304147.1">
    <molecule id="Q60605-1"/>
    <property type="nucleotide sequence ID" value="NM_001317218.2"/>
</dbReference>
<dbReference type="RefSeq" id="NP_034990.1">
    <molecule id="Q60605-2"/>
    <property type="nucleotide sequence ID" value="NM_010860.5"/>
</dbReference>
<dbReference type="SMR" id="Q60605"/>
<dbReference type="BioGRID" id="201658">
    <property type="interactions" value="27"/>
</dbReference>
<dbReference type="FunCoup" id="Q60605">
    <property type="interactions" value="1220"/>
</dbReference>
<dbReference type="IntAct" id="Q60605">
    <property type="interactions" value="5"/>
</dbReference>
<dbReference type="MINT" id="Q60605"/>
<dbReference type="STRING" id="10090.ENSMUSP00000128803"/>
<dbReference type="GlyGen" id="Q60605">
    <property type="glycosylation" value="1 site, 1 O-linked glycan (1 site)"/>
</dbReference>
<dbReference type="iPTMnet" id="Q60605"/>
<dbReference type="MetOSite" id="Q60605"/>
<dbReference type="PhosphoSitePlus" id="Q60605"/>
<dbReference type="SwissPalm" id="Q60605"/>
<dbReference type="REPRODUCTION-2DPAGE" id="Q60605"/>
<dbReference type="CPTAC" id="non-CPTAC-3845"/>
<dbReference type="jPOST" id="Q60605"/>
<dbReference type="PaxDb" id="10090-ENSMUSP00000128803"/>
<dbReference type="PeptideAtlas" id="Q60605"/>
<dbReference type="ProteomicsDB" id="287532">
    <molecule id="Q60605-1"/>
</dbReference>
<dbReference type="ProteomicsDB" id="287533">
    <molecule id="Q60605-2"/>
</dbReference>
<dbReference type="Pumba" id="Q60605"/>
<dbReference type="TopDownProteomics" id="Q60605-2">
    <molecule id="Q60605-2"/>
</dbReference>
<dbReference type="Antibodypedia" id="27997">
    <property type="antibodies" value="341 antibodies from 29 providers"/>
</dbReference>
<dbReference type="DNASU" id="17904"/>
<dbReference type="Ensembl" id="ENSMUST00000164181.2">
    <molecule id="Q60605-2"/>
    <property type="protein sequence ID" value="ENSMUSP00000128803.2"/>
    <property type="gene ID" value="ENSMUSG00000090841.3"/>
</dbReference>
<dbReference type="Ensembl" id="ENSMUST00000218127.2">
    <molecule id="Q60605-1"/>
    <property type="protein sequence ID" value="ENSMUSP00000151693.2"/>
    <property type="gene ID" value="ENSMUSG00000090841.3"/>
</dbReference>
<dbReference type="GeneID" id="17904"/>
<dbReference type="KEGG" id="mmu:17904"/>
<dbReference type="UCSC" id="uc007hnb.1">
    <molecule id="Q60605-1"/>
    <property type="organism name" value="mouse"/>
</dbReference>
<dbReference type="AGR" id="MGI:109318"/>
<dbReference type="CTD" id="4637"/>
<dbReference type="MGI" id="MGI:109318">
    <property type="gene designation" value="Myl6"/>
</dbReference>
<dbReference type="VEuPathDB" id="HostDB:ENSMUSG00000090841"/>
<dbReference type="eggNOG" id="KOG0030">
    <property type="taxonomic scope" value="Eukaryota"/>
</dbReference>
<dbReference type="GeneTree" id="ENSGT01030000234570"/>
<dbReference type="HOGENOM" id="CLU_061288_13_0_1"/>
<dbReference type="InParanoid" id="Q60605"/>
<dbReference type="OMA" id="HDQASTN"/>
<dbReference type="OrthoDB" id="5959761at2759"/>
<dbReference type="PhylomeDB" id="Q60605"/>
<dbReference type="TreeFam" id="TF351553"/>
<dbReference type="Reactome" id="R-MMU-445355">
    <property type="pathway name" value="Smooth Muscle Contraction"/>
</dbReference>
<dbReference type="Reactome" id="R-MMU-5627123">
    <property type="pathway name" value="RHO GTPases activate PAKs"/>
</dbReference>
<dbReference type="BioGRID-ORCS" id="17904">
    <property type="hits" value="4 hits in 78 CRISPR screens"/>
</dbReference>
<dbReference type="ChiTaRS" id="Myl6">
    <property type="organism name" value="mouse"/>
</dbReference>
<dbReference type="PRO" id="PR:Q60605"/>
<dbReference type="Proteomes" id="UP000000589">
    <property type="component" value="Chromosome 10"/>
</dbReference>
<dbReference type="RNAct" id="Q60605">
    <property type="molecule type" value="protein"/>
</dbReference>
<dbReference type="Bgee" id="ENSMUSG00000090841">
    <property type="expression patterns" value="Expressed in granulocyte and 239 other cell types or tissues"/>
</dbReference>
<dbReference type="ExpressionAtlas" id="Q60605">
    <property type="expression patterns" value="baseline and differential"/>
</dbReference>
<dbReference type="GO" id="GO:0005903">
    <property type="term" value="C:brush border"/>
    <property type="evidence" value="ECO:0007669"/>
    <property type="project" value="Ensembl"/>
</dbReference>
<dbReference type="GO" id="GO:0016459">
    <property type="term" value="C:myosin complex"/>
    <property type="evidence" value="ECO:0000304"/>
    <property type="project" value="HGNC-UCL"/>
</dbReference>
<dbReference type="GO" id="GO:0016461">
    <property type="term" value="C:unconventional myosin complex"/>
    <property type="evidence" value="ECO:0000314"/>
    <property type="project" value="UniProtKB"/>
</dbReference>
<dbReference type="GO" id="GO:0005509">
    <property type="term" value="F:calcium ion binding"/>
    <property type="evidence" value="ECO:0007669"/>
    <property type="project" value="InterPro"/>
</dbReference>
<dbReference type="GO" id="GO:0003774">
    <property type="term" value="F:cytoskeletal motor activity"/>
    <property type="evidence" value="ECO:0000304"/>
    <property type="project" value="HGNC-UCL"/>
</dbReference>
<dbReference type="GO" id="GO:0000146">
    <property type="term" value="F:microfilament motor activity"/>
    <property type="evidence" value="ECO:0000250"/>
    <property type="project" value="HGNC-UCL"/>
</dbReference>
<dbReference type="GO" id="GO:0008307">
    <property type="term" value="F:structural constituent of muscle"/>
    <property type="evidence" value="ECO:0000250"/>
    <property type="project" value="HGNC-UCL"/>
</dbReference>
<dbReference type="GO" id="GO:0006936">
    <property type="term" value="P:muscle contraction"/>
    <property type="evidence" value="ECO:0000304"/>
    <property type="project" value="HGNC-UCL"/>
</dbReference>
<dbReference type="GO" id="GO:0030049">
    <property type="term" value="P:muscle filament sliding"/>
    <property type="evidence" value="ECO:0000304"/>
    <property type="project" value="HGNC-UCL"/>
</dbReference>
<dbReference type="GO" id="GO:0007519">
    <property type="term" value="P:skeletal muscle tissue development"/>
    <property type="evidence" value="ECO:0000304"/>
    <property type="project" value="HGNC-UCL"/>
</dbReference>
<dbReference type="CDD" id="cd00051">
    <property type="entry name" value="EFh"/>
    <property type="match status" value="1"/>
</dbReference>
<dbReference type="FunFam" id="1.10.238.10:FF:000019">
    <property type="entry name" value="Myosin light chain 1 skeletal"/>
    <property type="match status" value="1"/>
</dbReference>
<dbReference type="FunFam" id="1.10.238.10:FF:000056">
    <property type="entry name" value="Myosin light chain 1 skeletal"/>
    <property type="match status" value="1"/>
</dbReference>
<dbReference type="Gene3D" id="1.10.238.10">
    <property type="entry name" value="EF-hand"/>
    <property type="match status" value="2"/>
</dbReference>
<dbReference type="InterPro" id="IPR050230">
    <property type="entry name" value="CALM/Myosin/TropC-like"/>
</dbReference>
<dbReference type="InterPro" id="IPR011992">
    <property type="entry name" value="EF-hand-dom_pair"/>
</dbReference>
<dbReference type="InterPro" id="IPR002048">
    <property type="entry name" value="EF_hand_dom"/>
</dbReference>
<dbReference type="PANTHER" id="PTHR23048">
    <property type="entry name" value="MYOSIN LIGHT CHAIN 1, 3"/>
    <property type="match status" value="1"/>
</dbReference>
<dbReference type="PANTHER" id="PTHR23048:SF43">
    <property type="entry name" value="MYOSIN LIGHT POLYPEPTIDE 6"/>
    <property type="match status" value="1"/>
</dbReference>
<dbReference type="SMART" id="SM00054">
    <property type="entry name" value="EFh"/>
    <property type="match status" value="2"/>
</dbReference>
<dbReference type="SUPFAM" id="SSF47473">
    <property type="entry name" value="EF-hand"/>
    <property type="match status" value="1"/>
</dbReference>
<dbReference type="PROSITE" id="PS50222">
    <property type="entry name" value="EF_HAND_2"/>
    <property type="match status" value="2"/>
</dbReference>
<comment type="function">
    <text>Regulatory light chain of myosin. Does not bind calcium.</text>
</comment>
<comment type="subunit">
    <text evidence="2">Myosin is a hexamer of 2 heavy chains and 4 light chains. Interacts with SPATA6 (PubMed:25605924).</text>
</comment>
<comment type="alternative products">
    <event type="alternative splicing"/>
    <isoform>
        <id>Q60605-1</id>
        <name>Non-muscle</name>
        <name>MLC3nm</name>
        <name>LC17A</name>
        <name>LC17-nm</name>
        <sequence type="displayed"/>
    </isoform>
    <isoform>
        <id>Q60605-2</id>
        <name>Smooth muscle</name>
        <name>MLC3sm</name>
        <name>LC17B</name>
        <name>LC17-sm</name>
        <sequence type="described" ref="VSP_009736"/>
    </isoform>
</comment>
<feature type="initiator methionine" description="Removed" evidence="3">
    <location>
        <position position="1"/>
    </location>
</feature>
<feature type="chain" id="PRO_0000198691" description="Myosin light polypeptide 6">
    <location>
        <begin position="2"/>
        <end position="151"/>
    </location>
</feature>
<feature type="domain" description="EF-hand 1" evidence="1">
    <location>
        <begin position="7"/>
        <end position="42"/>
    </location>
</feature>
<feature type="domain" description="EF-hand 2" evidence="1">
    <location>
        <begin position="84"/>
        <end position="119"/>
    </location>
</feature>
<feature type="domain" description="EF-hand 3" evidence="5">
    <location>
        <begin position="119"/>
        <end position="151"/>
    </location>
</feature>
<feature type="modified residue" description="N-acetylcysteine" evidence="3">
    <location>
        <position position="2"/>
    </location>
</feature>
<feature type="modified residue" description="Phosphoserine" evidence="7">
    <location>
        <position position="57"/>
    </location>
</feature>
<feature type="modified residue" description="N6-acetyllysine" evidence="8">
    <location>
        <position position="81"/>
    </location>
</feature>
<feature type="splice variant" id="VSP_009736" description="In isoform Smooth muscle." evidence="4">
    <original>AFVRHILSG</original>
    <variation>ELVRMVLNG</variation>
    <location>
        <begin position="143"/>
        <end position="151"/>
    </location>
</feature>
<feature type="sequence conflict" description="In Ref. 3; AAC52278." evidence="5" ref="3">
    <original>N</original>
    <variation>T</variation>
    <location>
        <position position="54"/>
    </location>
</feature>
<feature type="sequence conflict" description="In Ref. 3; AAC52278." evidence="5" ref="3">
    <original>D</original>
    <variation>A</variation>
    <location>
        <position position="82"/>
    </location>
</feature>
<feature type="modified residue" description="Phosphoserine" evidence="6 7">
    <location sequence="Q60605-2">
        <position position="135"/>
    </location>
</feature>
<name>MYL6_MOUSE</name>
<evidence type="ECO:0000255" key="1">
    <source>
        <dbReference type="PROSITE-ProRule" id="PRU00448"/>
    </source>
</evidence>
<evidence type="ECO:0000269" key="2">
    <source>
    </source>
</evidence>
<evidence type="ECO:0000269" key="3">
    <source ref="2"/>
</evidence>
<evidence type="ECO:0000303" key="4">
    <source>
    </source>
</evidence>
<evidence type="ECO:0000305" key="5"/>
<evidence type="ECO:0007744" key="6">
    <source>
    </source>
</evidence>
<evidence type="ECO:0007744" key="7">
    <source>
    </source>
</evidence>
<evidence type="ECO:0007744" key="8">
    <source>
    </source>
</evidence>
<organism>
    <name type="scientific">Mus musculus</name>
    <name type="common">Mouse</name>
    <dbReference type="NCBI Taxonomy" id="10090"/>
    <lineage>
        <taxon>Eukaryota</taxon>
        <taxon>Metazoa</taxon>
        <taxon>Chordata</taxon>
        <taxon>Craniata</taxon>
        <taxon>Vertebrata</taxon>
        <taxon>Euteleostomi</taxon>
        <taxon>Mammalia</taxon>
        <taxon>Eutheria</taxon>
        <taxon>Euarchontoglires</taxon>
        <taxon>Glires</taxon>
        <taxon>Rodentia</taxon>
        <taxon>Myomorpha</taxon>
        <taxon>Muroidea</taxon>
        <taxon>Muridae</taxon>
        <taxon>Murinae</taxon>
        <taxon>Mus</taxon>
        <taxon>Mus</taxon>
    </lineage>
</organism>
<keyword id="KW-0007">Acetylation</keyword>
<keyword id="KW-0025">Alternative splicing</keyword>
<keyword id="KW-0903">Direct protein sequencing</keyword>
<keyword id="KW-0505">Motor protein</keyword>
<keyword id="KW-0514">Muscle protein</keyword>
<keyword id="KW-0518">Myosin</keyword>
<keyword id="KW-0597">Phosphoprotein</keyword>
<keyword id="KW-1185">Reference proteome</keyword>
<keyword id="KW-0677">Repeat</keyword>
<proteinExistence type="evidence at protein level"/>
<protein>
    <recommendedName>
        <fullName>Myosin light polypeptide 6</fullName>
    </recommendedName>
    <alternativeName>
        <fullName>17 kDa myosin light chain</fullName>
        <shortName>LC17</shortName>
    </alternativeName>
    <alternativeName>
        <fullName>Myosin light chain 3</fullName>
        <shortName>MLC-3</shortName>
    </alternativeName>
    <alternativeName>
        <fullName>Myosin light chain alkali 3</fullName>
        <shortName>Myosin light chain A3</shortName>
    </alternativeName>
    <alternativeName>
        <fullName>Smooth muscle and nonmuscle myosin light chain alkali 6</fullName>
    </alternativeName>
</protein>
<accession>Q60605</accession>
<sequence>MCDFTEDQTAEFKEAFQLFDRTGDGKILYSQCGDVMRALGQNPTNAEVLKVLGNPKSDEMNVKVLDFEHFLPMLQTVAKNKDQGTYEDYVEGLRVFDKEGNGTVMGAEIRHVLVTLGEKMTEEEVEMLVAGHEDSNGCINYEAFVRHILSG</sequence>